<sequence>MKLVTCGLPYANGKAHVGHLRTYVPADVYVRYLRMSGEEVVFVCGSDCHGTPIVVNAEQQGLSPKELVDIYHEHFIKIFDALNIKFDFYGRTDSDYHHHRTTEIVKRLIEKGYVYPKEIQLAYCPKCQRFLPDRYVEGICPYCGALARGDECDQGCGRHLEPGEIKEPRCKICGSKAEFRSQRHYFFKLTEFQDFLEDYLSKLKGTENALNYARNWVKNLRDWCITRNLEWGVRFPGEPNLVVYVWVDAPIGYISFTEKACEEKGCDWRKIWIDGDAEIIHFIGLDIVYHHCIFWPAMLKGADYALPSAVVASGMVKVEGKTFSKSRGYVVWVEEDYLKSGLSPDYLRYYIVNYTSHQKDLNFSWEVFREKVNNEVIATLGNFLYRVLLFAWKNFGEVRMEGVDEEVLEKIRETEQKILSALEEWEFKAASDAFMELATYGNVYFQNAKPWELIKTDKEAARRAVASCLQLAKALIIFAYPVMPESMERMAKAIGLDLENVRLSDAYKVDEVMKLSKPEVPFAKVEDEVIEKLQKVMEKRFRGEGEKMEQKEEISIEDFQKLDIRIGRVLKAEKVKKSKKLIKLIIDIGDEQRQIVSGIAEDYTPEELEGKLVVVLANLKPAKFMGVESRGMILAAEKDGKAVLLTPEKEVEPGTRVC</sequence>
<evidence type="ECO:0000255" key="1">
    <source>
        <dbReference type="HAMAP-Rule" id="MF_00098"/>
    </source>
</evidence>
<keyword id="KW-0030">Aminoacyl-tRNA synthetase</keyword>
<keyword id="KW-0067">ATP-binding</keyword>
<keyword id="KW-0963">Cytoplasm</keyword>
<keyword id="KW-0436">Ligase</keyword>
<keyword id="KW-0479">Metal-binding</keyword>
<keyword id="KW-0547">Nucleotide-binding</keyword>
<keyword id="KW-0648">Protein biosynthesis</keyword>
<keyword id="KW-1185">Reference proteome</keyword>
<keyword id="KW-0694">RNA-binding</keyword>
<keyword id="KW-0820">tRNA-binding</keyword>
<keyword id="KW-0862">Zinc</keyword>
<accession>O28819</accession>
<dbReference type="EC" id="6.1.1.10" evidence="1"/>
<dbReference type="EMBL" id="AE000782">
    <property type="protein sequence ID" value="AAB89796.1"/>
    <property type="molecule type" value="Genomic_DNA"/>
</dbReference>
<dbReference type="PIR" id="D69431">
    <property type="entry name" value="D69431"/>
</dbReference>
<dbReference type="RefSeq" id="WP_010878950.1">
    <property type="nucleotide sequence ID" value="NC_000917.1"/>
</dbReference>
<dbReference type="SMR" id="O28819"/>
<dbReference type="STRING" id="224325.AF_1453"/>
<dbReference type="PaxDb" id="224325-AF_1453"/>
<dbReference type="EnsemblBacteria" id="AAB89796">
    <property type="protein sequence ID" value="AAB89796"/>
    <property type="gene ID" value="AF_1453"/>
</dbReference>
<dbReference type="GeneID" id="1484677"/>
<dbReference type="KEGG" id="afu:AF_1453"/>
<dbReference type="eggNOG" id="arCOG00810">
    <property type="taxonomic scope" value="Archaea"/>
</dbReference>
<dbReference type="HOGENOM" id="CLU_009710_1_2_2"/>
<dbReference type="OrthoDB" id="371856at2157"/>
<dbReference type="PhylomeDB" id="O28819"/>
<dbReference type="Proteomes" id="UP000002199">
    <property type="component" value="Chromosome"/>
</dbReference>
<dbReference type="GO" id="GO:0017101">
    <property type="term" value="C:aminoacyl-tRNA synthetase multienzyme complex"/>
    <property type="evidence" value="ECO:0007669"/>
    <property type="project" value="TreeGrafter"/>
</dbReference>
<dbReference type="GO" id="GO:0005829">
    <property type="term" value="C:cytosol"/>
    <property type="evidence" value="ECO:0007669"/>
    <property type="project" value="TreeGrafter"/>
</dbReference>
<dbReference type="GO" id="GO:0005524">
    <property type="term" value="F:ATP binding"/>
    <property type="evidence" value="ECO:0007669"/>
    <property type="project" value="UniProtKB-UniRule"/>
</dbReference>
<dbReference type="GO" id="GO:0046872">
    <property type="term" value="F:metal ion binding"/>
    <property type="evidence" value="ECO:0007669"/>
    <property type="project" value="UniProtKB-KW"/>
</dbReference>
<dbReference type="GO" id="GO:0004825">
    <property type="term" value="F:methionine-tRNA ligase activity"/>
    <property type="evidence" value="ECO:0007669"/>
    <property type="project" value="UniProtKB-UniRule"/>
</dbReference>
<dbReference type="GO" id="GO:0000049">
    <property type="term" value="F:tRNA binding"/>
    <property type="evidence" value="ECO:0007669"/>
    <property type="project" value="UniProtKB-KW"/>
</dbReference>
<dbReference type="GO" id="GO:0006431">
    <property type="term" value="P:methionyl-tRNA aminoacylation"/>
    <property type="evidence" value="ECO:0007669"/>
    <property type="project" value="UniProtKB-UniRule"/>
</dbReference>
<dbReference type="CDD" id="cd07957">
    <property type="entry name" value="Anticodon_Ia_Met"/>
    <property type="match status" value="1"/>
</dbReference>
<dbReference type="CDD" id="cd00814">
    <property type="entry name" value="MetRS_core"/>
    <property type="match status" value="1"/>
</dbReference>
<dbReference type="CDD" id="cd02800">
    <property type="entry name" value="tRNA_bind_EcMetRS_like"/>
    <property type="match status" value="1"/>
</dbReference>
<dbReference type="FunFam" id="2.20.28.20:FF:000001">
    <property type="entry name" value="Methionine--tRNA ligase"/>
    <property type="match status" value="1"/>
</dbReference>
<dbReference type="FunFam" id="2.40.50.140:FF:000042">
    <property type="entry name" value="Methionine--tRNA ligase"/>
    <property type="match status" value="1"/>
</dbReference>
<dbReference type="Gene3D" id="3.40.50.620">
    <property type="entry name" value="HUPs"/>
    <property type="match status" value="1"/>
</dbReference>
<dbReference type="Gene3D" id="1.10.730.10">
    <property type="entry name" value="Isoleucyl-tRNA Synthetase, Domain 1"/>
    <property type="match status" value="1"/>
</dbReference>
<dbReference type="Gene3D" id="2.20.28.20">
    <property type="entry name" value="Methionyl-tRNA synthetase, Zn-domain"/>
    <property type="match status" value="1"/>
</dbReference>
<dbReference type="Gene3D" id="2.40.50.140">
    <property type="entry name" value="Nucleic acid-binding proteins"/>
    <property type="match status" value="1"/>
</dbReference>
<dbReference type="HAMAP" id="MF_00098">
    <property type="entry name" value="Met_tRNA_synth_type1"/>
    <property type="match status" value="1"/>
</dbReference>
<dbReference type="InterPro" id="IPR041872">
    <property type="entry name" value="Anticodon_Met"/>
</dbReference>
<dbReference type="InterPro" id="IPR004495">
    <property type="entry name" value="Met-tRNA-synth_bsu_C"/>
</dbReference>
<dbReference type="InterPro" id="IPR023458">
    <property type="entry name" value="Met-tRNA_ligase_1"/>
</dbReference>
<dbReference type="InterPro" id="IPR014758">
    <property type="entry name" value="Met-tRNA_synth"/>
</dbReference>
<dbReference type="InterPro" id="IPR015413">
    <property type="entry name" value="Methionyl/Leucyl_tRNA_Synth"/>
</dbReference>
<dbReference type="InterPro" id="IPR033911">
    <property type="entry name" value="MetRS_core"/>
</dbReference>
<dbReference type="InterPro" id="IPR029038">
    <property type="entry name" value="MetRS_Zn"/>
</dbReference>
<dbReference type="InterPro" id="IPR012340">
    <property type="entry name" value="NA-bd_OB-fold"/>
</dbReference>
<dbReference type="InterPro" id="IPR014729">
    <property type="entry name" value="Rossmann-like_a/b/a_fold"/>
</dbReference>
<dbReference type="InterPro" id="IPR002547">
    <property type="entry name" value="tRNA-bd_dom"/>
</dbReference>
<dbReference type="InterPro" id="IPR009080">
    <property type="entry name" value="tRNAsynth_Ia_anticodon-bd"/>
</dbReference>
<dbReference type="NCBIfam" id="TIGR00398">
    <property type="entry name" value="metG"/>
    <property type="match status" value="1"/>
</dbReference>
<dbReference type="NCBIfam" id="TIGR00399">
    <property type="entry name" value="metG_C_term"/>
    <property type="match status" value="1"/>
</dbReference>
<dbReference type="NCBIfam" id="NF001100">
    <property type="entry name" value="PRK00133.1"/>
    <property type="match status" value="1"/>
</dbReference>
<dbReference type="PANTHER" id="PTHR45765">
    <property type="entry name" value="METHIONINE--TRNA LIGASE"/>
    <property type="match status" value="1"/>
</dbReference>
<dbReference type="PANTHER" id="PTHR45765:SF1">
    <property type="entry name" value="METHIONINE--TRNA LIGASE, CYTOPLASMIC"/>
    <property type="match status" value="1"/>
</dbReference>
<dbReference type="Pfam" id="PF19303">
    <property type="entry name" value="Anticodon_3"/>
    <property type="match status" value="1"/>
</dbReference>
<dbReference type="Pfam" id="PF09334">
    <property type="entry name" value="tRNA-synt_1g"/>
    <property type="match status" value="1"/>
</dbReference>
<dbReference type="Pfam" id="PF01588">
    <property type="entry name" value="tRNA_bind"/>
    <property type="match status" value="1"/>
</dbReference>
<dbReference type="PRINTS" id="PR01041">
    <property type="entry name" value="TRNASYNTHMET"/>
</dbReference>
<dbReference type="SUPFAM" id="SSF47323">
    <property type="entry name" value="Anticodon-binding domain of a subclass of class I aminoacyl-tRNA synthetases"/>
    <property type="match status" value="1"/>
</dbReference>
<dbReference type="SUPFAM" id="SSF57770">
    <property type="entry name" value="Methionyl-tRNA synthetase (MetRS), Zn-domain"/>
    <property type="match status" value="1"/>
</dbReference>
<dbReference type="SUPFAM" id="SSF50249">
    <property type="entry name" value="Nucleic acid-binding proteins"/>
    <property type="match status" value="1"/>
</dbReference>
<dbReference type="SUPFAM" id="SSF52374">
    <property type="entry name" value="Nucleotidylyl transferase"/>
    <property type="match status" value="1"/>
</dbReference>
<dbReference type="PROSITE" id="PS50886">
    <property type="entry name" value="TRBD"/>
    <property type="match status" value="1"/>
</dbReference>
<reference key="1">
    <citation type="journal article" date="1997" name="Nature">
        <title>The complete genome sequence of the hyperthermophilic, sulphate-reducing archaeon Archaeoglobus fulgidus.</title>
        <authorList>
            <person name="Klenk H.-P."/>
            <person name="Clayton R.A."/>
            <person name="Tomb J.-F."/>
            <person name="White O."/>
            <person name="Nelson K.E."/>
            <person name="Ketchum K.A."/>
            <person name="Dodson R.J."/>
            <person name="Gwinn M.L."/>
            <person name="Hickey E.K."/>
            <person name="Peterson J.D."/>
            <person name="Richardson D.L."/>
            <person name="Kerlavage A.R."/>
            <person name="Graham D.E."/>
            <person name="Kyrpides N.C."/>
            <person name="Fleischmann R.D."/>
            <person name="Quackenbush J."/>
            <person name="Lee N.H."/>
            <person name="Sutton G.G."/>
            <person name="Gill S.R."/>
            <person name="Kirkness E.F."/>
            <person name="Dougherty B.A."/>
            <person name="McKenney K."/>
            <person name="Adams M.D."/>
            <person name="Loftus B.J."/>
            <person name="Peterson S.N."/>
            <person name="Reich C.I."/>
            <person name="McNeil L.K."/>
            <person name="Badger J.H."/>
            <person name="Glodek A."/>
            <person name="Zhou L."/>
            <person name="Overbeek R."/>
            <person name="Gocayne J.D."/>
            <person name="Weidman J.F."/>
            <person name="McDonald L.A."/>
            <person name="Utterback T.R."/>
            <person name="Cotton M.D."/>
            <person name="Spriggs T."/>
            <person name="Artiach P."/>
            <person name="Kaine B.P."/>
            <person name="Sykes S.M."/>
            <person name="Sadow P.W."/>
            <person name="D'Andrea K.P."/>
            <person name="Bowman C."/>
            <person name="Fujii C."/>
            <person name="Garland S.A."/>
            <person name="Mason T.M."/>
            <person name="Olsen G.J."/>
            <person name="Fraser C.M."/>
            <person name="Smith H.O."/>
            <person name="Woese C.R."/>
            <person name="Venter J.C."/>
        </authorList>
    </citation>
    <scope>NUCLEOTIDE SEQUENCE [LARGE SCALE GENOMIC DNA]</scope>
    <source>
        <strain>ATCC 49558 / DSM 4304 / JCM 9628 / NBRC 100126 / VC-16</strain>
    </source>
</reference>
<proteinExistence type="inferred from homology"/>
<feature type="chain" id="PRO_0000139183" description="Methionine--tRNA ligase">
    <location>
        <begin position="1"/>
        <end position="658"/>
    </location>
</feature>
<feature type="domain" description="tRNA-binding" evidence="1">
    <location>
        <begin position="558"/>
        <end position="658"/>
    </location>
</feature>
<feature type="short sequence motif" description="'HIGH' region">
    <location>
        <begin position="9"/>
        <end position="19"/>
    </location>
</feature>
<feature type="short sequence motif" description="'KMSKS' region">
    <location>
        <begin position="322"/>
        <end position="326"/>
    </location>
</feature>
<feature type="binding site" evidence="1">
    <location>
        <position position="140"/>
    </location>
    <ligand>
        <name>Zn(2+)</name>
        <dbReference type="ChEBI" id="CHEBI:29105"/>
    </ligand>
</feature>
<feature type="binding site" evidence="1">
    <location>
        <position position="143"/>
    </location>
    <ligand>
        <name>Zn(2+)</name>
        <dbReference type="ChEBI" id="CHEBI:29105"/>
    </ligand>
</feature>
<feature type="binding site" evidence="1">
    <location>
        <position position="152"/>
    </location>
    <ligand>
        <name>Zn(2+)</name>
        <dbReference type="ChEBI" id="CHEBI:29105"/>
    </ligand>
</feature>
<feature type="binding site" evidence="1">
    <location>
        <position position="156"/>
    </location>
    <ligand>
        <name>Zn(2+)</name>
        <dbReference type="ChEBI" id="CHEBI:29105"/>
    </ligand>
</feature>
<feature type="binding site" evidence="1">
    <location>
        <position position="325"/>
    </location>
    <ligand>
        <name>ATP</name>
        <dbReference type="ChEBI" id="CHEBI:30616"/>
    </ligand>
</feature>
<protein>
    <recommendedName>
        <fullName evidence="1">Methionine--tRNA ligase</fullName>
        <ecNumber evidence="1">6.1.1.10</ecNumber>
    </recommendedName>
    <alternativeName>
        <fullName evidence="1">Methionyl-tRNA synthetase</fullName>
        <shortName evidence="1">MetRS</shortName>
    </alternativeName>
</protein>
<comment type="function">
    <text evidence="1">Is required not only for elongation of protein synthesis but also for the initiation of all mRNA translation through initiator tRNA(fMet) aminoacylation.</text>
</comment>
<comment type="catalytic activity">
    <reaction evidence="1">
        <text>tRNA(Met) + L-methionine + ATP = L-methionyl-tRNA(Met) + AMP + diphosphate</text>
        <dbReference type="Rhea" id="RHEA:13481"/>
        <dbReference type="Rhea" id="RHEA-COMP:9667"/>
        <dbReference type="Rhea" id="RHEA-COMP:9698"/>
        <dbReference type="ChEBI" id="CHEBI:30616"/>
        <dbReference type="ChEBI" id="CHEBI:33019"/>
        <dbReference type="ChEBI" id="CHEBI:57844"/>
        <dbReference type="ChEBI" id="CHEBI:78442"/>
        <dbReference type="ChEBI" id="CHEBI:78530"/>
        <dbReference type="ChEBI" id="CHEBI:456215"/>
        <dbReference type="EC" id="6.1.1.10"/>
    </reaction>
</comment>
<comment type="cofactor">
    <cofactor evidence="1">
        <name>Zn(2+)</name>
        <dbReference type="ChEBI" id="CHEBI:29105"/>
    </cofactor>
    <text evidence="1">Binds 1 zinc ion per subunit.</text>
</comment>
<comment type="subunit">
    <text evidence="1">Homodimer.</text>
</comment>
<comment type="subcellular location">
    <subcellularLocation>
        <location evidence="1">Cytoplasm</location>
    </subcellularLocation>
</comment>
<comment type="similarity">
    <text evidence="1">Belongs to the class-I aminoacyl-tRNA synthetase family. MetG type 1 subfamily.</text>
</comment>
<gene>
    <name evidence="1" type="primary">metG</name>
    <name type="ordered locus">AF_1453</name>
</gene>
<name>SYM_ARCFU</name>
<organism>
    <name type="scientific">Archaeoglobus fulgidus (strain ATCC 49558 / DSM 4304 / JCM 9628 / NBRC 100126 / VC-16)</name>
    <dbReference type="NCBI Taxonomy" id="224325"/>
    <lineage>
        <taxon>Archaea</taxon>
        <taxon>Methanobacteriati</taxon>
        <taxon>Methanobacteriota</taxon>
        <taxon>Archaeoglobi</taxon>
        <taxon>Archaeoglobales</taxon>
        <taxon>Archaeoglobaceae</taxon>
        <taxon>Archaeoglobus</taxon>
    </lineage>
</organism>